<proteinExistence type="inferred from homology"/>
<keyword id="KW-0012">Acyltransferase</keyword>
<keyword id="KW-0677">Repeat</keyword>
<keyword id="KW-0808">Transferase</keyword>
<sequence>MRKFLSKTHHHTNPLWRVYRLVKFSKVFKNVIIIEFSKFIPSMVLKRHIYKQLLNINIGNQSSIAYKVMLDIFYPELITIGSNSVIGYNVTILTHEALVDEFRYGPVTIGSNTLIGANATILPGITIGDNVKVAAGTVVSKDIPDNGFAYGNPMYIKMIRR</sequence>
<feature type="chain" id="PRO_0000068747" description="Putative acetyltransferase SA0717">
    <location>
        <begin position="1"/>
        <end position="161"/>
    </location>
</feature>
<protein>
    <recommendedName>
        <fullName>Putative acetyltransferase SA0717</fullName>
        <ecNumber>2.3.1.-</ecNumber>
    </recommendedName>
</protein>
<evidence type="ECO:0000305" key="1"/>
<organism>
    <name type="scientific">Staphylococcus aureus (strain N315)</name>
    <dbReference type="NCBI Taxonomy" id="158879"/>
    <lineage>
        <taxon>Bacteria</taxon>
        <taxon>Bacillati</taxon>
        <taxon>Bacillota</taxon>
        <taxon>Bacilli</taxon>
        <taxon>Bacillales</taxon>
        <taxon>Staphylococcaceae</taxon>
        <taxon>Staphylococcus</taxon>
    </lineage>
</organism>
<reference key="1">
    <citation type="journal article" date="2001" name="Lancet">
        <title>Whole genome sequencing of meticillin-resistant Staphylococcus aureus.</title>
        <authorList>
            <person name="Kuroda M."/>
            <person name="Ohta T."/>
            <person name="Uchiyama I."/>
            <person name="Baba T."/>
            <person name="Yuzawa H."/>
            <person name="Kobayashi I."/>
            <person name="Cui L."/>
            <person name="Oguchi A."/>
            <person name="Aoki K."/>
            <person name="Nagai Y."/>
            <person name="Lian J.-Q."/>
            <person name="Ito T."/>
            <person name="Kanamori M."/>
            <person name="Matsumaru H."/>
            <person name="Maruyama A."/>
            <person name="Murakami H."/>
            <person name="Hosoyama A."/>
            <person name="Mizutani-Ui Y."/>
            <person name="Takahashi N.K."/>
            <person name="Sawano T."/>
            <person name="Inoue R."/>
            <person name="Kaito C."/>
            <person name="Sekimizu K."/>
            <person name="Hirakawa H."/>
            <person name="Kuhara S."/>
            <person name="Goto S."/>
            <person name="Yabuzaki J."/>
            <person name="Kanehisa M."/>
            <person name="Yamashita A."/>
            <person name="Oshima K."/>
            <person name="Furuya K."/>
            <person name="Yoshino C."/>
            <person name="Shiba T."/>
            <person name="Hattori M."/>
            <person name="Ogasawara N."/>
            <person name="Hayashi H."/>
            <person name="Hiramatsu K."/>
        </authorList>
    </citation>
    <scope>NUCLEOTIDE SEQUENCE [LARGE SCALE GENOMIC DNA]</scope>
    <source>
        <strain>N315</strain>
    </source>
</reference>
<dbReference type="EC" id="2.3.1.-"/>
<dbReference type="EMBL" id="BA000018">
    <property type="protein sequence ID" value="BAB41950.1"/>
    <property type="molecule type" value="Genomic_DNA"/>
</dbReference>
<dbReference type="PIR" id="C89849">
    <property type="entry name" value="C89849"/>
</dbReference>
<dbReference type="RefSeq" id="WP_001224793.1">
    <property type="nucleotide sequence ID" value="NC_002745.2"/>
</dbReference>
<dbReference type="SMR" id="Q7A6Q9"/>
<dbReference type="EnsemblBacteria" id="BAB41950">
    <property type="protein sequence ID" value="BAB41950"/>
    <property type="gene ID" value="BAB41950"/>
</dbReference>
<dbReference type="KEGG" id="sau:SA0717"/>
<dbReference type="HOGENOM" id="CLU_051638_16_1_9"/>
<dbReference type="GO" id="GO:0016746">
    <property type="term" value="F:acyltransferase activity"/>
    <property type="evidence" value="ECO:0007669"/>
    <property type="project" value="UniProtKB-KW"/>
</dbReference>
<dbReference type="Gene3D" id="2.160.10.10">
    <property type="entry name" value="Hexapeptide repeat proteins"/>
    <property type="match status" value="1"/>
</dbReference>
<dbReference type="InterPro" id="IPR001451">
    <property type="entry name" value="Hexapep"/>
</dbReference>
<dbReference type="InterPro" id="IPR018357">
    <property type="entry name" value="Hexapep_transf_CS"/>
</dbReference>
<dbReference type="InterPro" id="IPR051159">
    <property type="entry name" value="Hexapeptide_acetyltransf"/>
</dbReference>
<dbReference type="InterPro" id="IPR011004">
    <property type="entry name" value="Trimer_LpxA-like_sf"/>
</dbReference>
<dbReference type="PANTHER" id="PTHR23416">
    <property type="entry name" value="SIALIC ACID SYNTHASE-RELATED"/>
    <property type="match status" value="1"/>
</dbReference>
<dbReference type="Pfam" id="PF14602">
    <property type="entry name" value="Hexapep_2"/>
    <property type="match status" value="1"/>
</dbReference>
<dbReference type="SUPFAM" id="SSF51161">
    <property type="entry name" value="Trimeric LpxA-like enzymes"/>
    <property type="match status" value="1"/>
</dbReference>
<dbReference type="PROSITE" id="PS00101">
    <property type="entry name" value="HEXAPEP_TRANSFERASES"/>
    <property type="match status" value="1"/>
</dbReference>
<name>ATRF1_STAAN</name>
<comment type="similarity">
    <text evidence="1">Belongs to the transferase hexapeptide repeat family.</text>
</comment>
<accession>Q7A6Q9</accession>
<gene>
    <name type="ordered locus">SA0717</name>
</gene>